<reference key="1">
    <citation type="submission" date="2006-09" db="EMBL/GenBank/DDBJ databases">
        <authorList>
            <consortium name="The Klebsiella pneumonia Genome Sequencing Project"/>
            <person name="McClelland M."/>
            <person name="Sanderson E.K."/>
            <person name="Spieth J."/>
            <person name="Clifton W.S."/>
            <person name="Latreille P."/>
            <person name="Sabo A."/>
            <person name="Pepin K."/>
            <person name="Bhonagiri V."/>
            <person name="Porwollik S."/>
            <person name="Ali J."/>
            <person name="Wilson R.K."/>
        </authorList>
    </citation>
    <scope>NUCLEOTIDE SEQUENCE [LARGE SCALE GENOMIC DNA]</scope>
    <source>
        <strain>ATCC 700721 / MGH 78578</strain>
    </source>
</reference>
<accession>A6TCU0</accession>
<dbReference type="EMBL" id="CP000647">
    <property type="protein sequence ID" value="ABR78411.1"/>
    <property type="molecule type" value="Genomic_DNA"/>
</dbReference>
<dbReference type="RefSeq" id="WP_002914321.1">
    <property type="nucleotide sequence ID" value="NC_009648.1"/>
</dbReference>
<dbReference type="SMR" id="A6TCU0"/>
<dbReference type="STRING" id="272620.KPN_03005"/>
<dbReference type="PaxDb" id="272620-KPN_03005"/>
<dbReference type="EnsemblBacteria" id="ABR78411">
    <property type="protein sequence ID" value="ABR78411"/>
    <property type="gene ID" value="KPN_03005"/>
</dbReference>
<dbReference type="KEGG" id="kpn:KPN_03005"/>
<dbReference type="HOGENOM" id="CLU_114845_0_0_6"/>
<dbReference type="Proteomes" id="UP000000265">
    <property type="component" value="Chromosome"/>
</dbReference>
<dbReference type="GO" id="GO:0010181">
    <property type="term" value="F:FMN binding"/>
    <property type="evidence" value="ECO:0007669"/>
    <property type="project" value="InterPro"/>
</dbReference>
<dbReference type="GO" id="GO:0036211">
    <property type="term" value="P:protein modification process"/>
    <property type="evidence" value="ECO:0007669"/>
    <property type="project" value="InterPro"/>
</dbReference>
<dbReference type="FunFam" id="3.40.50.360:FF:000005">
    <property type="entry name" value="Protein NrdI"/>
    <property type="match status" value="1"/>
</dbReference>
<dbReference type="Gene3D" id="3.40.50.360">
    <property type="match status" value="1"/>
</dbReference>
<dbReference type="HAMAP" id="MF_00128">
    <property type="entry name" value="NrdI"/>
    <property type="match status" value="1"/>
</dbReference>
<dbReference type="InterPro" id="IPR029039">
    <property type="entry name" value="Flavoprotein-like_sf"/>
</dbReference>
<dbReference type="InterPro" id="IPR020852">
    <property type="entry name" value="RNR_Ib_NrdI_bac"/>
</dbReference>
<dbReference type="InterPro" id="IPR004465">
    <property type="entry name" value="RNR_NrdI"/>
</dbReference>
<dbReference type="NCBIfam" id="TIGR00333">
    <property type="entry name" value="nrdI"/>
    <property type="match status" value="1"/>
</dbReference>
<dbReference type="PANTHER" id="PTHR37297">
    <property type="entry name" value="PROTEIN NRDI"/>
    <property type="match status" value="1"/>
</dbReference>
<dbReference type="PANTHER" id="PTHR37297:SF1">
    <property type="entry name" value="PROTEIN NRDI"/>
    <property type="match status" value="1"/>
</dbReference>
<dbReference type="Pfam" id="PF07972">
    <property type="entry name" value="Flavodoxin_NdrI"/>
    <property type="match status" value="1"/>
</dbReference>
<dbReference type="PIRSF" id="PIRSF005087">
    <property type="entry name" value="NrdI"/>
    <property type="match status" value="1"/>
</dbReference>
<dbReference type="SUPFAM" id="SSF52218">
    <property type="entry name" value="Flavoproteins"/>
    <property type="match status" value="1"/>
</dbReference>
<evidence type="ECO:0000255" key="1">
    <source>
        <dbReference type="HAMAP-Rule" id="MF_00128"/>
    </source>
</evidence>
<comment type="function">
    <text evidence="1">Probably involved in ribonucleotide reductase function.</text>
</comment>
<comment type="similarity">
    <text evidence="1">Belongs to the NrdI family.</text>
</comment>
<name>NRDI_KLEP7</name>
<gene>
    <name evidence="1" type="primary">nrdI</name>
    <name type="ordered locus">KPN78578_29500</name>
    <name type="ORF">KPN_03005</name>
</gene>
<protein>
    <recommendedName>
        <fullName evidence="1">Protein NrdI</fullName>
    </recommendedName>
</protein>
<proteinExistence type="inferred from homology"/>
<sequence length="136" mass="15321">MSLIVYFSSRSENTHRFVQRLGLPAVRIPLNEREHLRVDEPYILIVPSYGGGGTAGAVPRQAIRFLNDVHNRQLIRGVIAAGNRNFGDGWGRAGDVIAQKCAVPYLYRFELMGTPDDINTVRKGVSEFWQRQPQNV</sequence>
<feature type="chain" id="PRO_1000016503" description="Protein NrdI">
    <location>
        <begin position="1"/>
        <end position="136"/>
    </location>
</feature>
<organism>
    <name type="scientific">Klebsiella pneumoniae subsp. pneumoniae (strain ATCC 700721 / MGH 78578)</name>
    <dbReference type="NCBI Taxonomy" id="272620"/>
    <lineage>
        <taxon>Bacteria</taxon>
        <taxon>Pseudomonadati</taxon>
        <taxon>Pseudomonadota</taxon>
        <taxon>Gammaproteobacteria</taxon>
        <taxon>Enterobacterales</taxon>
        <taxon>Enterobacteriaceae</taxon>
        <taxon>Klebsiella/Raoultella group</taxon>
        <taxon>Klebsiella</taxon>
        <taxon>Klebsiella pneumoniae complex</taxon>
    </lineage>
</organism>